<feature type="signal peptide" evidence="1">
    <location>
        <begin position="1"/>
        <end position="23"/>
    </location>
</feature>
<feature type="chain" id="PRO_0000425553" description="Coiled-coil domain-containing glutamate-rich protein 2">
    <location>
        <begin position="24"/>
        <end position="266"/>
    </location>
</feature>
<feature type="region of interest" description="Disordered" evidence="2">
    <location>
        <begin position="90"/>
        <end position="266"/>
    </location>
</feature>
<feature type="compositionally biased region" description="Basic and acidic residues" evidence="2">
    <location>
        <begin position="90"/>
        <end position="100"/>
    </location>
</feature>
<feature type="compositionally biased region" description="Basic and acidic residues" evidence="2">
    <location>
        <begin position="154"/>
        <end position="188"/>
    </location>
</feature>
<feature type="compositionally biased region" description="Basic and acidic residues" evidence="2">
    <location>
        <begin position="204"/>
        <end position="213"/>
    </location>
</feature>
<feature type="compositionally biased region" description="Basic and acidic residues" evidence="2">
    <location>
        <begin position="221"/>
        <end position="266"/>
    </location>
</feature>
<feature type="sequence variant" id="VAR_079159" description="In dbSNP:rs76973734." evidence="3">
    <original>E</original>
    <variation>D</variation>
    <location>
        <position position="33"/>
    </location>
</feature>
<feature type="sequence variant" id="VAR_079160" description="In dbSNP:rs530595113." evidence="3">
    <original>L</original>
    <variation>P</variation>
    <location>
        <position position="39"/>
    </location>
</feature>
<feature type="sequence variant" id="VAR_079161" description="In dbSNP:rs375222589." evidence="3">
    <original>E</original>
    <variation>D</variation>
    <location>
        <position position="64"/>
    </location>
</feature>
<feature type="sequence variant" id="VAR_079162" description="Found in patients with Moyamoya disease; uncertain significance." evidence="3">
    <original>TEEKG</original>
    <variation>PS</variation>
    <location>
        <begin position="76"/>
        <end position="80"/>
    </location>
</feature>
<feature type="sequence variant" id="VAR_079163" description="In dbSNP:rs908319857." evidence="3">
    <original>G</original>
    <variation>V</variation>
    <location>
        <position position="80"/>
    </location>
</feature>
<feature type="sequence variant" id="VAR_079164" description="In dbSNP:rs371603378." evidence="3">
    <original>E</original>
    <variation>K</variation>
    <location>
        <position position="160"/>
    </location>
</feature>
<feature type="sequence variant" id="VAR_079165" description="In dbSNP:rs569628536." evidence="3">
    <original>R</original>
    <variation>C</variation>
    <location>
        <position position="195"/>
    </location>
</feature>
<feature type="sequence variant" id="VAR_079166" description="Found in patients with Moyamoya disease; uncertain significance." evidence="3">
    <location>
        <begin position="218"/>
        <end position="220"/>
    </location>
</feature>
<feature type="sequence variant" id="VAR_079167" evidence="3">
    <location>
        <position position="220"/>
    </location>
</feature>
<feature type="sequence variant" id="VAR_079168" description="In dbSNP:rs1301343892." evidence="3">
    <original>A</original>
    <variation>T</variation>
    <location>
        <position position="224"/>
    </location>
</feature>
<feature type="sequence variant" id="VAR_079169" description="Found in patients with Moyamoya disease; uncertain significance." evidence="3">
    <location>
        <position position="229"/>
    </location>
</feature>
<feature type="sequence variant" id="VAR_079170" description="In dbSNP:rs369436329." evidence="3">
    <original>E</original>
    <variation>A</variation>
    <location>
        <position position="232"/>
    </location>
</feature>
<feature type="sequence variant" id="VAR_079171" description="Found in patients with Moyamoya disease; uncertain significance; dbSNP:rs1205789753." evidence="3">
    <original>E</original>
    <variation>K</variation>
    <location>
        <position position="242"/>
    </location>
</feature>
<feature type="sequence variant" id="VAR_079172" description="In dbSNP:rs565410180." evidence="3">
    <original>D</original>
    <variation>G</variation>
    <location>
        <position position="249"/>
    </location>
</feature>
<name>CCER2_HUMAN</name>
<proteinExistence type="evidence at protein level"/>
<sequence length="266" mass="30352">MPPRGPASELLLLRLLLLGAATAAPLAPRPSKEELTRCLAEVVTEVLTVGQVQRGPCTALLHKELCGTEPHGCASTEEKGLLLGDFKKQEAGKMRSSQEVRDEEEEEVAERTHKSEVQEQAIRMQGHRQLHQEEDEEEEKEERKRGPMETFEDLWQRHLENGGDLQKRVAEKASDKETAQFQAEEKGVRVLGGDRSLWQGAERGGGERREDLPHHHHHHHQPEAEPRQEKEEASEREEKEVEQLEHLRDELKKVTETLGEQLRREG</sequence>
<comment type="subcellular location">
    <subcellularLocation>
        <location evidence="4">Secreted</location>
    </subcellularLocation>
</comment>
<comment type="tissue specificity">
    <text evidence="3">Expressed at higher levels in fetal brain and skeletal muscle. Lower expression is detected in fetal kidney, liver, spleen, thymus, heart and lung.</text>
</comment>
<comment type="caution">
    <text evidence="4">Despite its name, does not contain a real coiled coil domain region: predicted coiled coil regions are the result of the Glu-rich region.</text>
</comment>
<gene>
    <name type="primary">CCER2</name>
</gene>
<protein>
    <recommendedName>
        <fullName>Coiled-coil domain-containing glutamate-rich protein 2</fullName>
    </recommendedName>
</protein>
<accession>I3L3R5</accession>
<organism>
    <name type="scientific">Homo sapiens</name>
    <name type="common">Human</name>
    <dbReference type="NCBI Taxonomy" id="9606"/>
    <lineage>
        <taxon>Eukaryota</taxon>
        <taxon>Metazoa</taxon>
        <taxon>Chordata</taxon>
        <taxon>Craniata</taxon>
        <taxon>Vertebrata</taxon>
        <taxon>Euteleostomi</taxon>
        <taxon>Mammalia</taxon>
        <taxon>Eutheria</taxon>
        <taxon>Euarchontoglires</taxon>
        <taxon>Primates</taxon>
        <taxon>Haplorrhini</taxon>
        <taxon>Catarrhini</taxon>
        <taxon>Hominidae</taxon>
        <taxon>Homo</taxon>
    </lineage>
</organism>
<keyword id="KW-1267">Proteomics identification</keyword>
<keyword id="KW-1185">Reference proteome</keyword>
<keyword id="KW-0964">Secreted</keyword>
<keyword id="KW-0732">Signal</keyword>
<evidence type="ECO:0000255" key="1"/>
<evidence type="ECO:0000256" key="2">
    <source>
        <dbReference type="SAM" id="MobiDB-lite"/>
    </source>
</evidence>
<evidence type="ECO:0000269" key="3">
    <source>
    </source>
</evidence>
<evidence type="ECO:0000305" key="4"/>
<dbReference type="EMBL" id="AC011455">
    <property type="status" value="NOT_ANNOTATED_CDS"/>
    <property type="molecule type" value="Genomic_DNA"/>
</dbReference>
<dbReference type="CCDS" id="CCDS58661.1"/>
<dbReference type="RefSeq" id="NP_001230141.1">
    <property type="nucleotide sequence ID" value="NM_001243212.2"/>
</dbReference>
<dbReference type="RefSeq" id="XP_011525520.1">
    <property type="nucleotide sequence ID" value="XM_011527218.2"/>
</dbReference>
<dbReference type="RefSeq" id="XP_054177736.1">
    <property type="nucleotide sequence ID" value="XM_054321761.1"/>
</dbReference>
<dbReference type="RefSeq" id="XP_054187947.1">
    <property type="nucleotide sequence ID" value="XM_054331972.1"/>
</dbReference>
<dbReference type="STRING" id="9606.ENSP00000460665"/>
<dbReference type="BioMuta" id="CCER2"/>
<dbReference type="MassIVE" id="I3L3R5"/>
<dbReference type="PaxDb" id="9606-ENSP00000460665"/>
<dbReference type="PeptideAtlas" id="I3L3R5"/>
<dbReference type="Antibodypedia" id="77033">
    <property type="antibodies" value="5 antibodies from 5 providers"/>
</dbReference>
<dbReference type="DNASU" id="643669"/>
<dbReference type="Ensembl" id="ENST00000571838.2">
    <property type="protein sequence ID" value="ENSP00000460665.1"/>
    <property type="gene ID" value="ENSG00000262484.2"/>
</dbReference>
<dbReference type="Ensembl" id="ENST00000635114.1">
    <property type="protein sequence ID" value="ENSP00000488939.1"/>
    <property type="gene ID" value="ENSG00000283099.1"/>
</dbReference>
<dbReference type="GeneID" id="643669"/>
<dbReference type="KEGG" id="hsa:643669"/>
<dbReference type="MANE-Select" id="ENST00000571838.2">
    <property type="protein sequence ID" value="ENSP00000460665.1"/>
    <property type="RefSeq nucleotide sequence ID" value="NM_001243212.2"/>
    <property type="RefSeq protein sequence ID" value="NP_001230141.1"/>
</dbReference>
<dbReference type="UCSC" id="uc021uuj.1">
    <property type="organism name" value="human"/>
</dbReference>
<dbReference type="AGR" id="HGNC:44662"/>
<dbReference type="CTD" id="643669"/>
<dbReference type="DisGeNET" id="643669"/>
<dbReference type="GeneCards" id="CCER2"/>
<dbReference type="HGNC" id="HGNC:44662">
    <property type="gene designation" value="CCER2"/>
</dbReference>
<dbReference type="HPA" id="ENSG00000262484">
    <property type="expression patterns" value="Tissue enhanced (brain, testis)"/>
</dbReference>
<dbReference type="MalaCards" id="CCER2"/>
<dbReference type="MIM" id="617634">
    <property type="type" value="gene"/>
</dbReference>
<dbReference type="neXtProt" id="NX_I3L3R5"/>
<dbReference type="OpenTargets" id="ENSG00000262484"/>
<dbReference type="VEuPathDB" id="HostDB:ENSG00000262484"/>
<dbReference type="eggNOG" id="ENOG502T87V">
    <property type="taxonomic scope" value="Eukaryota"/>
</dbReference>
<dbReference type="GeneTree" id="ENSGT00670000099437"/>
<dbReference type="HOGENOM" id="CLU_1045679_0_0_1"/>
<dbReference type="InParanoid" id="I3L3R5"/>
<dbReference type="OMA" id="HKSEVRE"/>
<dbReference type="OrthoDB" id="9451865at2759"/>
<dbReference type="PAN-GO" id="I3L3R5">
    <property type="GO annotations" value="0 GO annotations based on evolutionary models"/>
</dbReference>
<dbReference type="PathwayCommons" id="I3L3R5"/>
<dbReference type="BioGRID-ORCS" id="643669">
    <property type="hits" value="27 hits in 1043 CRISPR screens"/>
</dbReference>
<dbReference type="ChiTaRS" id="CCER2">
    <property type="organism name" value="human"/>
</dbReference>
<dbReference type="GenomeRNAi" id="643669"/>
<dbReference type="Pharos" id="I3L3R5">
    <property type="development level" value="Tdark"/>
</dbReference>
<dbReference type="PRO" id="PR:I3L3R5"/>
<dbReference type="Proteomes" id="UP000005640">
    <property type="component" value="Chromosome 19"/>
</dbReference>
<dbReference type="RNAct" id="I3L3R5">
    <property type="molecule type" value="protein"/>
</dbReference>
<dbReference type="Bgee" id="ENSG00000262484">
    <property type="expression patterns" value="Expressed in male germ line stem cell (sensu Vertebrata) in testis and 92 other cell types or tissues"/>
</dbReference>
<dbReference type="ExpressionAtlas" id="I3L3R5">
    <property type="expression patterns" value="baseline and differential"/>
</dbReference>
<dbReference type="GO" id="GO:0005576">
    <property type="term" value="C:extracellular region"/>
    <property type="evidence" value="ECO:0007669"/>
    <property type="project" value="UniProtKB-SubCell"/>
</dbReference>
<reference key="1">
    <citation type="journal article" date="2004" name="Nature">
        <title>The DNA sequence and biology of human chromosome 19.</title>
        <authorList>
            <person name="Grimwood J."/>
            <person name="Gordon L.A."/>
            <person name="Olsen A.S."/>
            <person name="Terry A."/>
            <person name="Schmutz J."/>
            <person name="Lamerdin J.E."/>
            <person name="Hellsten U."/>
            <person name="Goodstein D."/>
            <person name="Couronne O."/>
            <person name="Tran-Gyamfi M."/>
            <person name="Aerts A."/>
            <person name="Altherr M."/>
            <person name="Ashworth L."/>
            <person name="Bajorek E."/>
            <person name="Black S."/>
            <person name="Branscomb E."/>
            <person name="Caenepeel S."/>
            <person name="Carrano A.V."/>
            <person name="Caoile C."/>
            <person name="Chan Y.M."/>
            <person name="Christensen M."/>
            <person name="Cleland C.A."/>
            <person name="Copeland A."/>
            <person name="Dalin E."/>
            <person name="Dehal P."/>
            <person name="Denys M."/>
            <person name="Detter J.C."/>
            <person name="Escobar J."/>
            <person name="Flowers D."/>
            <person name="Fotopulos D."/>
            <person name="Garcia C."/>
            <person name="Georgescu A.M."/>
            <person name="Glavina T."/>
            <person name="Gomez M."/>
            <person name="Gonzales E."/>
            <person name="Groza M."/>
            <person name="Hammon N."/>
            <person name="Hawkins T."/>
            <person name="Haydu L."/>
            <person name="Ho I."/>
            <person name="Huang W."/>
            <person name="Israni S."/>
            <person name="Jett J."/>
            <person name="Kadner K."/>
            <person name="Kimball H."/>
            <person name="Kobayashi A."/>
            <person name="Larionov V."/>
            <person name="Leem S.-H."/>
            <person name="Lopez F."/>
            <person name="Lou Y."/>
            <person name="Lowry S."/>
            <person name="Malfatti S."/>
            <person name="Martinez D."/>
            <person name="McCready P.M."/>
            <person name="Medina C."/>
            <person name="Morgan J."/>
            <person name="Nelson K."/>
            <person name="Nolan M."/>
            <person name="Ovcharenko I."/>
            <person name="Pitluck S."/>
            <person name="Pollard M."/>
            <person name="Popkie A.P."/>
            <person name="Predki P."/>
            <person name="Quan G."/>
            <person name="Ramirez L."/>
            <person name="Rash S."/>
            <person name="Retterer J."/>
            <person name="Rodriguez A."/>
            <person name="Rogers S."/>
            <person name="Salamov A."/>
            <person name="Salazar A."/>
            <person name="She X."/>
            <person name="Smith D."/>
            <person name="Slezak T."/>
            <person name="Solovyev V."/>
            <person name="Thayer N."/>
            <person name="Tice H."/>
            <person name="Tsai M."/>
            <person name="Ustaszewska A."/>
            <person name="Vo N."/>
            <person name="Wagner M."/>
            <person name="Wheeler J."/>
            <person name="Wu K."/>
            <person name="Xie G."/>
            <person name="Yang J."/>
            <person name="Dubchak I."/>
            <person name="Furey T.S."/>
            <person name="DeJong P."/>
            <person name="Dickson M."/>
            <person name="Gordon D."/>
            <person name="Eichler E.E."/>
            <person name="Pennacchio L.A."/>
            <person name="Richardson P."/>
            <person name="Stubbs L."/>
            <person name="Rokhsar D.S."/>
            <person name="Myers R.M."/>
            <person name="Rubin E.M."/>
            <person name="Lucas S.M."/>
        </authorList>
    </citation>
    <scope>NUCLEOTIDE SEQUENCE [LARGE SCALE GENOMIC DNA]</scope>
</reference>
<reference key="2">
    <citation type="journal article" date="2017" name="J. Stroke Cerebrovasc. Dis.">
        <title>Exome sequencing identified CCER2 as a novel candidate gene for Moyamoya disease.</title>
        <authorList>
            <person name="Mukawa M."/>
            <person name="Nariai T."/>
            <person name="Onda H."/>
            <person name="Yoneyama T."/>
            <person name="Aihara Y."/>
            <person name="Hirota K."/>
            <person name="Kudo T."/>
            <person name="Sumita K."/>
            <person name="Maehara T."/>
            <person name="Kawamata T."/>
            <person name="Kasuya H."/>
            <person name="Akagawa H."/>
        </authorList>
    </citation>
    <scope>TISSUE SPECIFICITY</scope>
    <scope>VARIANTS ASP-33; PRO-39; ASP-64; 76-THR--GLY-80 DELINS PRO-SER; VAL-80; LYS-160; CYS-195; 218-HIS--HIS-220 DEL; HIS-220 DEL; THR-224; GLU-229 DEL; ALA-232; LYS-242 AND GLY-249</scope>
</reference>